<accession>Q8NZ24</accession>
<gene>
    <name evidence="1" type="primary">mutS</name>
    <name type="ordered locus">spyM18_2180</name>
</gene>
<proteinExistence type="inferred from homology"/>
<name>MUTS_STRP8</name>
<organism>
    <name type="scientific">Streptococcus pyogenes serotype M18 (strain MGAS8232)</name>
    <dbReference type="NCBI Taxonomy" id="186103"/>
    <lineage>
        <taxon>Bacteria</taxon>
        <taxon>Bacillati</taxon>
        <taxon>Bacillota</taxon>
        <taxon>Bacilli</taxon>
        <taxon>Lactobacillales</taxon>
        <taxon>Streptococcaceae</taxon>
        <taxon>Streptococcus</taxon>
    </lineage>
</organism>
<comment type="function">
    <text evidence="1">This protein is involved in the repair of mismatches in DNA. It is possible that it carries out the mismatch recognition step. This protein has a weak ATPase activity.</text>
</comment>
<comment type="similarity">
    <text evidence="1">Belongs to the DNA mismatch repair MutS family.</text>
</comment>
<keyword id="KW-0067">ATP-binding</keyword>
<keyword id="KW-0227">DNA damage</keyword>
<keyword id="KW-0234">DNA repair</keyword>
<keyword id="KW-0238">DNA-binding</keyword>
<keyword id="KW-0547">Nucleotide-binding</keyword>
<reference key="1">
    <citation type="journal article" date="2002" name="Proc. Natl. Acad. Sci. U.S.A.">
        <title>Genome sequence and comparative microarray analysis of serotype M18 group A Streptococcus strains associated with acute rheumatic fever outbreaks.</title>
        <authorList>
            <person name="Smoot J.C."/>
            <person name="Barbian K.D."/>
            <person name="Van Gompel J.J."/>
            <person name="Smoot L.M."/>
            <person name="Chaussee M.S."/>
            <person name="Sylva G.L."/>
            <person name="Sturdevant D.E."/>
            <person name="Ricklefs S.M."/>
            <person name="Porcella S.F."/>
            <person name="Parkins L.D."/>
            <person name="Beres S.B."/>
            <person name="Campbell D.S."/>
            <person name="Smith T.M."/>
            <person name="Zhang Q."/>
            <person name="Kapur V."/>
            <person name="Daly J.A."/>
            <person name="Veasy L.G."/>
            <person name="Musser J.M."/>
        </authorList>
    </citation>
    <scope>NUCLEOTIDE SEQUENCE [LARGE SCALE GENOMIC DNA]</scope>
    <source>
        <strain>MGAS8232</strain>
    </source>
</reference>
<feature type="chain" id="PRO_0000115152" description="DNA mismatch repair protein MutS">
    <location>
        <begin position="1"/>
        <end position="851"/>
    </location>
</feature>
<feature type="binding site" evidence="1">
    <location>
        <begin position="602"/>
        <end position="609"/>
    </location>
    <ligand>
        <name>ATP</name>
        <dbReference type="ChEBI" id="CHEBI:30616"/>
    </ligand>
</feature>
<evidence type="ECO:0000255" key="1">
    <source>
        <dbReference type="HAMAP-Rule" id="MF_00096"/>
    </source>
</evidence>
<protein>
    <recommendedName>
        <fullName evidence="1">DNA mismatch repair protein MutS</fullName>
    </recommendedName>
</protein>
<dbReference type="EMBL" id="AE009949">
    <property type="protein sequence ID" value="AAL98624.1"/>
    <property type="molecule type" value="Genomic_DNA"/>
</dbReference>
<dbReference type="RefSeq" id="WP_011018318.1">
    <property type="nucleotide sequence ID" value="NC_003485.1"/>
</dbReference>
<dbReference type="SMR" id="Q8NZ24"/>
<dbReference type="KEGG" id="spm:spyM18_2180"/>
<dbReference type="HOGENOM" id="CLU_002472_3_1_9"/>
<dbReference type="GO" id="GO:0005829">
    <property type="term" value="C:cytosol"/>
    <property type="evidence" value="ECO:0007669"/>
    <property type="project" value="TreeGrafter"/>
</dbReference>
<dbReference type="GO" id="GO:0005524">
    <property type="term" value="F:ATP binding"/>
    <property type="evidence" value="ECO:0007669"/>
    <property type="project" value="UniProtKB-UniRule"/>
</dbReference>
<dbReference type="GO" id="GO:0140664">
    <property type="term" value="F:ATP-dependent DNA damage sensor activity"/>
    <property type="evidence" value="ECO:0007669"/>
    <property type="project" value="InterPro"/>
</dbReference>
<dbReference type="GO" id="GO:0003684">
    <property type="term" value="F:damaged DNA binding"/>
    <property type="evidence" value="ECO:0007669"/>
    <property type="project" value="UniProtKB-UniRule"/>
</dbReference>
<dbReference type="GO" id="GO:0030983">
    <property type="term" value="F:mismatched DNA binding"/>
    <property type="evidence" value="ECO:0007669"/>
    <property type="project" value="InterPro"/>
</dbReference>
<dbReference type="GO" id="GO:0006298">
    <property type="term" value="P:mismatch repair"/>
    <property type="evidence" value="ECO:0007669"/>
    <property type="project" value="UniProtKB-UniRule"/>
</dbReference>
<dbReference type="CDD" id="cd03284">
    <property type="entry name" value="ABC_MutS1"/>
    <property type="match status" value="1"/>
</dbReference>
<dbReference type="FunFam" id="1.10.1420.10:FF:000001">
    <property type="entry name" value="DNA mismatch repair protein MutS"/>
    <property type="match status" value="1"/>
</dbReference>
<dbReference type="FunFam" id="3.40.1170.10:FF:000001">
    <property type="entry name" value="DNA mismatch repair protein MutS"/>
    <property type="match status" value="1"/>
</dbReference>
<dbReference type="FunFam" id="3.40.50.300:FF:000896">
    <property type="entry name" value="DNA mismatch repair protein MutS"/>
    <property type="match status" value="1"/>
</dbReference>
<dbReference type="Gene3D" id="1.10.1420.10">
    <property type="match status" value="2"/>
</dbReference>
<dbReference type="Gene3D" id="3.40.1170.10">
    <property type="entry name" value="DNA repair protein MutS, domain I"/>
    <property type="match status" value="1"/>
</dbReference>
<dbReference type="Gene3D" id="3.30.420.110">
    <property type="entry name" value="MutS, connector domain"/>
    <property type="match status" value="1"/>
</dbReference>
<dbReference type="Gene3D" id="3.40.50.300">
    <property type="entry name" value="P-loop containing nucleotide triphosphate hydrolases"/>
    <property type="match status" value="1"/>
</dbReference>
<dbReference type="HAMAP" id="MF_00096">
    <property type="entry name" value="MutS"/>
    <property type="match status" value="1"/>
</dbReference>
<dbReference type="InterPro" id="IPR005748">
    <property type="entry name" value="DNA_mismatch_repair_MutS"/>
</dbReference>
<dbReference type="InterPro" id="IPR007695">
    <property type="entry name" value="DNA_mismatch_repair_MutS-lik_N"/>
</dbReference>
<dbReference type="InterPro" id="IPR017261">
    <property type="entry name" value="DNA_mismatch_repair_MutS/MSH"/>
</dbReference>
<dbReference type="InterPro" id="IPR000432">
    <property type="entry name" value="DNA_mismatch_repair_MutS_C"/>
</dbReference>
<dbReference type="InterPro" id="IPR007861">
    <property type="entry name" value="DNA_mismatch_repair_MutS_clamp"/>
</dbReference>
<dbReference type="InterPro" id="IPR007696">
    <property type="entry name" value="DNA_mismatch_repair_MutS_core"/>
</dbReference>
<dbReference type="InterPro" id="IPR016151">
    <property type="entry name" value="DNA_mismatch_repair_MutS_N"/>
</dbReference>
<dbReference type="InterPro" id="IPR036187">
    <property type="entry name" value="DNA_mismatch_repair_MutS_sf"/>
</dbReference>
<dbReference type="InterPro" id="IPR007860">
    <property type="entry name" value="DNA_mmatch_repair_MutS_con_dom"/>
</dbReference>
<dbReference type="InterPro" id="IPR045076">
    <property type="entry name" value="MutS"/>
</dbReference>
<dbReference type="InterPro" id="IPR036678">
    <property type="entry name" value="MutS_con_dom_sf"/>
</dbReference>
<dbReference type="InterPro" id="IPR027417">
    <property type="entry name" value="P-loop_NTPase"/>
</dbReference>
<dbReference type="NCBIfam" id="TIGR01070">
    <property type="entry name" value="mutS1"/>
    <property type="match status" value="1"/>
</dbReference>
<dbReference type="NCBIfam" id="NF003810">
    <property type="entry name" value="PRK05399.1"/>
    <property type="match status" value="1"/>
</dbReference>
<dbReference type="PANTHER" id="PTHR11361:SF34">
    <property type="entry name" value="DNA MISMATCH REPAIR PROTEIN MSH1, MITOCHONDRIAL"/>
    <property type="match status" value="1"/>
</dbReference>
<dbReference type="PANTHER" id="PTHR11361">
    <property type="entry name" value="DNA MISMATCH REPAIR PROTEIN MUTS FAMILY MEMBER"/>
    <property type="match status" value="1"/>
</dbReference>
<dbReference type="Pfam" id="PF01624">
    <property type="entry name" value="MutS_I"/>
    <property type="match status" value="1"/>
</dbReference>
<dbReference type="Pfam" id="PF05188">
    <property type="entry name" value="MutS_II"/>
    <property type="match status" value="1"/>
</dbReference>
<dbReference type="Pfam" id="PF05192">
    <property type="entry name" value="MutS_III"/>
    <property type="match status" value="1"/>
</dbReference>
<dbReference type="Pfam" id="PF05190">
    <property type="entry name" value="MutS_IV"/>
    <property type="match status" value="1"/>
</dbReference>
<dbReference type="Pfam" id="PF00488">
    <property type="entry name" value="MutS_V"/>
    <property type="match status" value="1"/>
</dbReference>
<dbReference type="PIRSF" id="PIRSF037677">
    <property type="entry name" value="DNA_mis_repair_Msh6"/>
    <property type="match status" value="1"/>
</dbReference>
<dbReference type="SMART" id="SM00534">
    <property type="entry name" value="MUTSac"/>
    <property type="match status" value="1"/>
</dbReference>
<dbReference type="SMART" id="SM00533">
    <property type="entry name" value="MUTSd"/>
    <property type="match status" value="1"/>
</dbReference>
<dbReference type="SUPFAM" id="SSF55271">
    <property type="entry name" value="DNA repair protein MutS, domain I"/>
    <property type="match status" value="1"/>
</dbReference>
<dbReference type="SUPFAM" id="SSF53150">
    <property type="entry name" value="DNA repair protein MutS, domain II"/>
    <property type="match status" value="1"/>
</dbReference>
<dbReference type="SUPFAM" id="SSF48334">
    <property type="entry name" value="DNA repair protein MutS, domain III"/>
    <property type="match status" value="1"/>
</dbReference>
<dbReference type="SUPFAM" id="SSF52540">
    <property type="entry name" value="P-loop containing nucleoside triphosphate hydrolases"/>
    <property type="match status" value="1"/>
</dbReference>
<dbReference type="PROSITE" id="PS00486">
    <property type="entry name" value="DNA_MISMATCH_REPAIR_2"/>
    <property type="match status" value="1"/>
</dbReference>
<sequence>MAKTNISPGMQQYLDIKKDYPDAFLLFRMGDFYELFYEDAVKAAQLLEIGLTSRNKNAENPIPMAGVPHHSAQQYIDVLIELGYKVAVAEQMEDPKQAVGVVKREVVQVITPGTVVDSAKPDSANNFLVAVDFDGCRYGLAYMDVSTGEFCVTDLADFTSVRSEIQNLKAKEVLLGFDLSEEEQTILVKQMNLLLSYEETVYEDKSLIDGQLTTVELTAAGKLLQYVHKTQMRELSHLQALVHYEIKDYLQMSYATKSSLDLVENARTNKKHGSLYWLLDETKTAMGMRLLRSWIDRPLVSKEAILERQEIIQVFLNAFIERTDLSNSLKGVYDIERLSSRVSFGKANPKDLLQLGHTLAQVPYIKAILESFNSPCVDKLVNDIDSLPELEYLIRTAIDTDAPATISEGSIIRTGFDERLDHYRKVMREGTGWIADIEAKERQASGINNLKIDYNKKDGYYFHVTTSNLSLVPEHFFRKATLKNSERYGTAELAKIEGQMLEAREESSSLEYDIFMCIRAQVETYINRLQKLAKTLATVDVLQSLAVVAETNHYIRPQFNDNHMITIQEGRHAVVEKVMGVQEYIPNSISFDQQTSIQLITGPNMSGKSTYMRQLALTVIMAQMGSFVAADHVDLPLFDAIFTRIGAADDLISGQSTFMVEMMEANQAIKRASDNSLILFDELGRGTATYDGMALAQAIIEYIHDRVGAKTIFATHYHELTDLSTKLTSLVNVHVATLEKDGDVTFLHKIAEGPADKSYGIHVAKIAGLPKSLLKRADEVLIRLETQSRSTEIISVPSKVEPSSAAREGQLSLFPDEDKSQEIIHTLEAIDVMNMTPLQAMTTLYELKKLL</sequence>